<dbReference type="EMBL" id="AE002160">
    <property type="protein sequence ID" value="AAF39429.1"/>
    <property type="molecule type" value="Genomic_DNA"/>
</dbReference>
<dbReference type="PIR" id="G81685">
    <property type="entry name" value="G81685"/>
</dbReference>
<dbReference type="RefSeq" id="WP_009871670.1">
    <property type="nucleotide sequence ID" value="NZ_CP063055.1"/>
</dbReference>
<dbReference type="SMR" id="P65107"/>
<dbReference type="GeneID" id="93065146"/>
<dbReference type="KEGG" id="cmu:TC_0597"/>
<dbReference type="eggNOG" id="COG0361">
    <property type="taxonomic scope" value="Bacteria"/>
</dbReference>
<dbReference type="HOGENOM" id="CLU_151267_1_0_0"/>
<dbReference type="OrthoDB" id="9803250at2"/>
<dbReference type="Proteomes" id="UP000000800">
    <property type="component" value="Chromosome"/>
</dbReference>
<dbReference type="GO" id="GO:0005829">
    <property type="term" value="C:cytosol"/>
    <property type="evidence" value="ECO:0007669"/>
    <property type="project" value="TreeGrafter"/>
</dbReference>
<dbReference type="GO" id="GO:0043022">
    <property type="term" value="F:ribosome binding"/>
    <property type="evidence" value="ECO:0007669"/>
    <property type="project" value="UniProtKB-UniRule"/>
</dbReference>
<dbReference type="GO" id="GO:0019843">
    <property type="term" value="F:rRNA binding"/>
    <property type="evidence" value="ECO:0007669"/>
    <property type="project" value="UniProtKB-UniRule"/>
</dbReference>
<dbReference type="GO" id="GO:0003743">
    <property type="term" value="F:translation initiation factor activity"/>
    <property type="evidence" value="ECO:0007669"/>
    <property type="project" value="UniProtKB-UniRule"/>
</dbReference>
<dbReference type="CDD" id="cd04451">
    <property type="entry name" value="S1_IF1"/>
    <property type="match status" value="1"/>
</dbReference>
<dbReference type="FunFam" id="2.40.50.140:FF:000002">
    <property type="entry name" value="Translation initiation factor IF-1"/>
    <property type="match status" value="1"/>
</dbReference>
<dbReference type="Gene3D" id="2.40.50.140">
    <property type="entry name" value="Nucleic acid-binding proteins"/>
    <property type="match status" value="1"/>
</dbReference>
<dbReference type="HAMAP" id="MF_00075">
    <property type="entry name" value="IF_1"/>
    <property type="match status" value="1"/>
</dbReference>
<dbReference type="InterPro" id="IPR012340">
    <property type="entry name" value="NA-bd_OB-fold"/>
</dbReference>
<dbReference type="InterPro" id="IPR006196">
    <property type="entry name" value="RNA-binding_domain_S1_IF1"/>
</dbReference>
<dbReference type="InterPro" id="IPR003029">
    <property type="entry name" value="S1_domain"/>
</dbReference>
<dbReference type="InterPro" id="IPR004368">
    <property type="entry name" value="TIF_IF1"/>
</dbReference>
<dbReference type="NCBIfam" id="TIGR00008">
    <property type="entry name" value="infA"/>
    <property type="match status" value="1"/>
</dbReference>
<dbReference type="PANTHER" id="PTHR33370">
    <property type="entry name" value="TRANSLATION INITIATION FACTOR IF-1, CHLOROPLASTIC"/>
    <property type="match status" value="1"/>
</dbReference>
<dbReference type="PANTHER" id="PTHR33370:SF1">
    <property type="entry name" value="TRANSLATION INITIATION FACTOR IF-1, CHLOROPLASTIC"/>
    <property type="match status" value="1"/>
</dbReference>
<dbReference type="Pfam" id="PF01176">
    <property type="entry name" value="eIF-1a"/>
    <property type="match status" value="1"/>
</dbReference>
<dbReference type="SMART" id="SM00316">
    <property type="entry name" value="S1"/>
    <property type="match status" value="1"/>
</dbReference>
<dbReference type="SUPFAM" id="SSF50249">
    <property type="entry name" value="Nucleic acid-binding proteins"/>
    <property type="match status" value="1"/>
</dbReference>
<dbReference type="PROSITE" id="PS50832">
    <property type="entry name" value="S1_IF1_TYPE"/>
    <property type="match status" value="1"/>
</dbReference>
<comment type="function">
    <text evidence="1">One of the essential components for the initiation of protein synthesis. Stabilizes the binding of IF-2 and IF-3 on the 30S subunit to which N-formylmethionyl-tRNA(fMet) subsequently binds. Helps modulate mRNA selection, yielding the 30S pre-initiation complex (PIC). Upon addition of the 50S ribosomal subunit IF-1, IF-2 and IF-3 are released leaving the mature 70S translation initiation complex.</text>
</comment>
<comment type="subunit">
    <text evidence="1">Component of the 30S ribosomal translation pre-initiation complex which assembles on the 30S ribosome in the order IF-2 and IF-3, IF-1 and N-formylmethionyl-tRNA(fMet); mRNA recruitment can occur at any time during PIC assembly.</text>
</comment>
<comment type="subcellular location">
    <subcellularLocation>
        <location evidence="1">Cytoplasm</location>
    </subcellularLocation>
</comment>
<comment type="similarity">
    <text evidence="1">Belongs to the IF-1 family.</text>
</comment>
<evidence type="ECO:0000255" key="1">
    <source>
        <dbReference type="HAMAP-Rule" id="MF_00075"/>
    </source>
</evidence>
<organism>
    <name type="scientific">Chlamydia muridarum (strain MoPn / Nigg)</name>
    <dbReference type="NCBI Taxonomy" id="243161"/>
    <lineage>
        <taxon>Bacteria</taxon>
        <taxon>Pseudomonadati</taxon>
        <taxon>Chlamydiota</taxon>
        <taxon>Chlamydiia</taxon>
        <taxon>Chlamydiales</taxon>
        <taxon>Chlamydiaceae</taxon>
        <taxon>Chlamydia/Chlamydophila group</taxon>
        <taxon>Chlamydia</taxon>
    </lineage>
</organism>
<feature type="chain" id="PRO_0000095772" description="Translation initiation factor IF-1">
    <location>
        <begin position="1"/>
        <end position="73"/>
    </location>
</feature>
<feature type="domain" description="S1-like" evidence="1">
    <location>
        <begin position="1"/>
        <end position="73"/>
    </location>
</feature>
<name>IF1_CHLMU</name>
<protein>
    <recommendedName>
        <fullName evidence="1">Translation initiation factor IF-1</fullName>
    </recommendedName>
</protein>
<accession>P65107</accession>
<accession>O84325</accession>
<proteinExistence type="inferred from homology"/>
<gene>
    <name evidence="1" type="primary">infA</name>
    <name type="ordered locus">TC_0597</name>
</gene>
<keyword id="KW-0963">Cytoplasm</keyword>
<keyword id="KW-0396">Initiation factor</keyword>
<keyword id="KW-0648">Protein biosynthesis</keyword>
<keyword id="KW-0694">RNA-binding</keyword>
<keyword id="KW-0699">rRNA-binding</keyword>
<reference key="1">
    <citation type="journal article" date="2000" name="Nucleic Acids Res.">
        <title>Genome sequences of Chlamydia trachomatis MoPn and Chlamydia pneumoniae AR39.</title>
        <authorList>
            <person name="Read T.D."/>
            <person name="Brunham R.C."/>
            <person name="Shen C."/>
            <person name="Gill S.R."/>
            <person name="Heidelberg J.F."/>
            <person name="White O."/>
            <person name="Hickey E.K."/>
            <person name="Peterson J.D."/>
            <person name="Utterback T.R."/>
            <person name="Berry K.J."/>
            <person name="Bass S."/>
            <person name="Linher K.D."/>
            <person name="Weidman J.F."/>
            <person name="Khouri H.M."/>
            <person name="Craven B."/>
            <person name="Bowman C."/>
            <person name="Dodson R.J."/>
            <person name="Gwinn M.L."/>
            <person name="Nelson W.C."/>
            <person name="DeBoy R.T."/>
            <person name="Kolonay J.F."/>
            <person name="McClarty G."/>
            <person name="Salzberg S.L."/>
            <person name="Eisen J.A."/>
            <person name="Fraser C.M."/>
        </authorList>
    </citation>
    <scope>NUCLEOTIDE SEQUENCE [LARGE SCALE GENOMIC DNA]</scope>
    <source>
        <strain>MoPn / Nigg</strain>
    </source>
</reference>
<sequence length="73" mass="8413">MAKKEDTIVLEGRVEELLPGMHFRVMLENGVPITAHLCGKMRMSNIRLLVGDRVTVEMSTYDLTKARVVYRHR</sequence>